<accession>Q6N4S0</accession>
<sequence>MAMNQEIMNLFNPTTPAQVFDQIRISIASPEKILSWSYGEIKKPETINYRTFKPERDGLFCARIFGPIKDYECLCGKYKRMKYKGIICEKCSVEVTLSRVRRERMGHIELAAPVAHIWFLKSLPSRIGQLLDMTLKDLERILYFEYYVVLEPGLTDLKERQLLSEEEYLRAQDQYGQDSFTAMIGAEAIRELLKGLELEKIDAQLRAEMAETDSDIKHKKLAKRLKIVEAFRYSGNKPEWMILTVVPVIPPDLRPLVPLDGGRFATSDLNDLYRRVINRNNRLKRLMELRAPDIIIRNEKRMLQEAVDALFDNGRRGRVITGANKRPLKSLADMLKGKQGRFRQNLLGKRVDYSGRSVIVVGPELKLHQCGLPKKMALELFKPFIYSRLDAKGLSTTVKQAKKLVEKERPEVWDILDEVIREHPVLLNRAPTLHRLGIQAFEPVLIEGKAIQLHPLVCSAFNADFDGDQMAVHVPLSLEAQLEARVLMMSTNNILHPANGQPIIVPSQDIVLGLYYLSIMREGLPGEGKVFADLAELEHALYSKVIHLHTKIKYRWHWVNEEGENTVRLLETTAGRILLGQVLPKSPKLPFDVINKLMTKREISGVIDQVYRHCGQKETVIFCDRIMALGFFNAFKAGISFGKDDMVVPGSKWKIVDSTRTLAKDFEQQYNDGLITHGEKYNKVVDAWSKATEEIAKEMMKEISAVRKAPDGSEQQVNSIYMMAHSGARGSPAQMRQLAGMRGLMAKPSGEIIETPIISNFKEGLSVLEYFNSTHGARKGLADTALKTANSGYLTRRLVDVAQDCIITQADCGTSLGIKMRAIVDAGTVVASLGSRILGRTAGEDVRDPATNEIIVKRGDLMEERDVEAIHQAGVQEVKIRSALTCELVNGICGKCYGRDLARGTPVNHGEAVGVIAAQSIGEPGTQLTMRTFHIGGAAQINEQSVIESNFDGKIVIKNRAIARNGEGHNVAMVRNMVIAIVDPDGTERATHRIQYGARVHVDEGDMVKRGQRIAEWDPYTRPILTEVEGEIGFEDLIEDQSISETLDESTGIAKRIVIDWRSTRGGADLRPAIVIKGKDGKVLKLARGGDARYMLSVDAILSVDVGAQVKPGDILARISTESAKTRDITGGLPRVAELFEARRPKDAAIIAEIAGTIRFGRDYKNKRRLSIEPLDKNEEAREYLIPKGKHIHLQDGDVVEKGDFIVEGNPAPHDILAIKGIEELAAYLVNEIQEVYRLQGVLINDKHIEVIVRQMLQKIEITDQGDTDMISGEQVDKIEFNALNAKAVEEGKKPATGNPVLLGITKASLQTRSFFSAASFQETTRVLTEAAVNGKVDPLEGLKENVIVGRLIPAGTGASMAKIREVAVKRDRLILDEREKQAAIVPAAAPEAEPLSLPPAE</sequence>
<proteinExistence type="inferred from homology"/>
<name>RPOC_RHOPA</name>
<keyword id="KW-0240">DNA-directed RNA polymerase</keyword>
<keyword id="KW-0460">Magnesium</keyword>
<keyword id="KW-0479">Metal-binding</keyword>
<keyword id="KW-0548">Nucleotidyltransferase</keyword>
<keyword id="KW-0804">Transcription</keyword>
<keyword id="KW-0808">Transferase</keyword>
<keyword id="KW-0862">Zinc</keyword>
<gene>
    <name evidence="1" type="primary">rpoC</name>
    <name type="ordered locus">RPA3267</name>
</gene>
<comment type="function">
    <text evidence="1">DNA-dependent RNA polymerase catalyzes the transcription of DNA into RNA using the four ribonucleoside triphosphates as substrates.</text>
</comment>
<comment type="catalytic activity">
    <reaction evidence="1">
        <text>RNA(n) + a ribonucleoside 5'-triphosphate = RNA(n+1) + diphosphate</text>
        <dbReference type="Rhea" id="RHEA:21248"/>
        <dbReference type="Rhea" id="RHEA-COMP:14527"/>
        <dbReference type="Rhea" id="RHEA-COMP:17342"/>
        <dbReference type="ChEBI" id="CHEBI:33019"/>
        <dbReference type="ChEBI" id="CHEBI:61557"/>
        <dbReference type="ChEBI" id="CHEBI:140395"/>
        <dbReference type="EC" id="2.7.7.6"/>
    </reaction>
</comment>
<comment type="cofactor">
    <cofactor evidence="1">
        <name>Mg(2+)</name>
        <dbReference type="ChEBI" id="CHEBI:18420"/>
    </cofactor>
    <text evidence="1">Binds 1 Mg(2+) ion per subunit.</text>
</comment>
<comment type="cofactor">
    <cofactor evidence="1">
        <name>Zn(2+)</name>
        <dbReference type="ChEBI" id="CHEBI:29105"/>
    </cofactor>
    <text evidence="1">Binds 2 Zn(2+) ions per subunit.</text>
</comment>
<comment type="subunit">
    <text evidence="1">The RNAP catalytic core consists of 2 alpha, 1 beta, 1 beta' and 1 omega subunit. When a sigma factor is associated with the core the holoenzyme is formed, which can initiate transcription.</text>
</comment>
<comment type="similarity">
    <text evidence="1">Belongs to the RNA polymerase beta' chain family.</text>
</comment>
<organism>
    <name type="scientific">Rhodopseudomonas palustris (strain ATCC BAA-98 / CGA009)</name>
    <dbReference type="NCBI Taxonomy" id="258594"/>
    <lineage>
        <taxon>Bacteria</taxon>
        <taxon>Pseudomonadati</taxon>
        <taxon>Pseudomonadota</taxon>
        <taxon>Alphaproteobacteria</taxon>
        <taxon>Hyphomicrobiales</taxon>
        <taxon>Nitrobacteraceae</taxon>
        <taxon>Rhodopseudomonas</taxon>
    </lineage>
</organism>
<reference key="1">
    <citation type="journal article" date="2004" name="Nat. Biotechnol.">
        <title>Complete genome sequence of the metabolically versatile photosynthetic bacterium Rhodopseudomonas palustris.</title>
        <authorList>
            <person name="Larimer F.W."/>
            <person name="Chain P."/>
            <person name="Hauser L."/>
            <person name="Lamerdin J.E."/>
            <person name="Malfatti S."/>
            <person name="Do L."/>
            <person name="Land M.L."/>
            <person name="Pelletier D.A."/>
            <person name="Beatty J.T."/>
            <person name="Lang A.S."/>
            <person name="Tabita F.R."/>
            <person name="Gibson J.L."/>
            <person name="Hanson T.E."/>
            <person name="Bobst C."/>
            <person name="Torres y Torres J.L."/>
            <person name="Peres C."/>
            <person name="Harrison F.H."/>
            <person name="Gibson J."/>
            <person name="Harwood C.S."/>
        </authorList>
    </citation>
    <scope>NUCLEOTIDE SEQUENCE [LARGE SCALE GENOMIC DNA]</scope>
    <source>
        <strain>ATCC BAA-98 / CGA009</strain>
    </source>
</reference>
<protein>
    <recommendedName>
        <fullName evidence="1">DNA-directed RNA polymerase subunit beta'</fullName>
        <shortName evidence="1">RNAP subunit beta'</shortName>
        <ecNumber evidence="1">2.7.7.6</ecNumber>
    </recommendedName>
    <alternativeName>
        <fullName evidence="1">RNA polymerase subunit beta'</fullName>
    </alternativeName>
    <alternativeName>
        <fullName evidence="1">Transcriptase subunit beta'</fullName>
    </alternativeName>
</protein>
<feature type="chain" id="PRO_0000225572" description="DNA-directed RNA polymerase subunit beta'">
    <location>
        <begin position="1"/>
        <end position="1402"/>
    </location>
</feature>
<feature type="binding site" evidence="1">
    <location>
        <position position="73"/>
    </location>
    <ligand>
        <name>Zn(2+)</name>
        <dbReference type="ChEBI" id="CHEBI:29105"/>
        <label>1</label>
    </ligand>
</feature>
<feature type="binding site" evidence="1">
    <location>
        <position position="75"/>
    </location>
    <ligand>
        <name>Zn(2+)</name>
        <dbReference type="ChEBI" id="CHEBI:29105"/>
        <label>1</label>
    </ligand>
</feature>
<feature type="binding site" evidence="1">
    <location>
        <position position="88"/>
    </location>
    <ligand>
        <name>Zn(2+)</name>
        <dbReference type="ChEBI" id="CHEBI:29105"/>
        <label>1</label>
    </ligand>
</feature>
<feature type="binding site" evidence="1">
    <location>
        <position position="91"/>
    </location>
    <ligand>
        <name>Zn(2+)</name>
        <dbReference type="ChEBI" id="CHEBI:29105"/>
        <label>1</label>
    </ligand>
</feature>
<feature type="binding site" evidence="1">
    <location>
        <position position="464"/>
    </location>
    <ligand>
        <name>Mg(2+)</name>
        <dbReference type="ChEBI" id="CHEBI:18420"/>
    </ligand>
</feature>
<feature type="binding site" evidence="1">
    <location>
        <position position="466"/>
    </location>
    <ligand>
        <name>Mg(2+)</name>
        <dbReference type="ChEBI" id="CHEBI:18420"/>
    </ligand>
</feature>
<feature type="binding site" evidence="1">
    <location>
        <position position="468"/>
    </location>
    <ligand>
        <name>Mg(2+)</name>
        <dbReference type="ChEBI" id="CHEBI:18420"/>
    </ligand>
</feature>
<feature type="binding site" evidence="1">
    <location>
        <position position="812"/>
    </location>
    <ligand>
        <name>Zn(2+)</name>
        <dbReference type="ChEBI" id="CHEBI:29105"/>
        <label>2</label>
    </ligand>
</feature>
<feature type="binding site" evidence="1">
    <location>
        <position position="886"/>
    </location>
    <ligand>
        <name>Zn(2+)</name>
        <dbReference type="ChEBI" id="CHEBI:29105"/>
        <label>2</label>
    </ligand>
</feature>
<feature type="binding site" evidence="1">
    <location>
        <position position="893"/>
    </location>
    <ligand>
        <name>Zn(2+)</name>
        <dbReference type="ChEBI" id="CHEBI:29105"/>
        <label>2</label>
    </ligand>
</feature>
<feature type="binding site" evidence="1">
    <location>
        <position position="896"/>
    </location>
    <ligand>
        <name>Zn(2+)</name>
        <dbReference type="ChEBI" id="CHEBI:29105"/>
        <label>2</label>
    </ligand>
</feature>
<evidence type="ECO:0000255" key="1">
    <source>
        <dbReference type="HAMAP-Rule" id="MF_01322"/>
    </source>
</evidence>
<dbReference type="EC" id="2.7.7.6" evidence="1"/>
<dbReference type="EMBL" id="BX572603">
    <property type="protein sequence ID" value="CAE28708.1"/>
    <property type="molecule type" value="Genomic_DNA"/>
</dbReference>
<dbReference type="SMR" id="Q6N4S0"/>
<dbReference type="STRING" id="258594.RPA3267"/>
<dbReference type="eggNOG" id="COG0086">
    <property type="taxonomic scope" value="Bacteria"/>
</dbReference>
<dbReference type="HOGENOM" id="CLU_000524_3_1_5"/>
<dbReference type="PhylomeDB" id="Q6N4S0"/>
<dbReference type="GO" id="GO:0000428">
    <property type="term" value="C:DNA-directed RNA polymerase complex"/>
    <property type="evidence" value="ECO:0007669"/>
    <property type="project" value="UniProtKB-KW"/>
</dbReference>
<dbReference type="GO" id="GO:0003677">
    <property type="term" value="F:DNA binding"/>
    <property type="evidence" value="ECO:0007669"/>
    <property type="project" value="UniProtKB-UniRule"/>
</dbReference>
<dbReference type="GO" id="GO:0003899">
    <property type="term" value="F:DNA-directed RNA polymerase activity"/>
    <property type="evidence" value="ECO:0007669"/>
    <property type="project" value="UniProtKB-UniRule"/>
</dbReference>
<dbReference type="GO" id="GO:0000287">
    <property type="term" value="F:magnesium ion binding"/>
    <property type="evidence" value="ECO:0007669"/>
    <property type="project" value="UniProtKB-UniRule"/>
</dbReference>
<dbReference type="GO" id="GO:0008270">
    <property type="term" value="F:zinc ion binding"/>
    <property type="evidence" value="ECO:0007669"/>
    <property type="project" value="UniProtKB-UniRule"/>
</dbReference>
<dbReference type="GO" id="GO:0006351">
    <property type="term" value="P:DNA-templated transcription"/>
    <property type="evidence" value="ECO:0007669"/>
    <property type="project" value="UniProtKB-UniRule"/>
</dbReference>
<dbReference type="CDD" id="cd02655">
    <property type="entry name" value="RNAP_beta'_C"/>
    <property type="match status" value="1"/>
</dbReference>
<dbReference type="CDD" id="cd01609">
    <property type="entry name" value="RNAP_beta'_N"/>
    <property type="match status" value="1"/>
</dbReference>
<dbReference type="FunFam" id="1.10.132.30:FF:000003">
    <property type="entry name" value="DNA-directed RNA polymerase subunit beta"/>
    <property type="match status" value="1"/>
</dbReference>
<dbReference type="Gene3D" id="1.10.132.30">
    <property type="match status" value="1"/>
</dbReference>
<dbReference type="Gene3D" id="1.10.150.390">
    <property type="match status" value="1"/>
</dbReference>
<dbReference type="Gene3D" id="1.10.1790.20">
    <property type="match status" value="1"/>
</dbReference>
<dbReference type="Gene3D" id="1.10.40.90">
    <property type="match status" value="1"/>
</dbReference>
<dbReference type="Gene3D" id="2.40.40.20">
    <property type="match status" value="1"/>
</dbReference>
<dbReference type="Gene3D" id="2.40.50.100">
    <property type="match status" value="3"/>
</dbReference>
<dbReference type="Gene3D" id="4.10.860.120">
    <property type="entry name" value="RNA polymerase II, clamp domain"/>
    <property type="match status" value="1"/>
</dbReference>
<dbReference type="Gene3D" id="1.10.274.100">
    <property type="entry name" value="RNA polymerase Rpb1, domain 3"/>
    <property type="match status" value="1"/>
</dbReference>
<dbReference type="HAMAP" id="MF_01322">
    <property type="entry name" value="RNApol_bact_RpoC"/>
    <property type="match status" value="1"/>
</dbReference>
<dbReference type="InterPro" id="IPR045867">
    <property type="entry name" value="DNA-dir_RpoC_beta_prime"/>
</dbReference>
<dbReference type="InterPro" id="IPR012754">
    <property type="entry name" value="DNA-dir_RpoC_beta_prime_bact"/>
</dbReference>
<dbReference type="InterPro" id="IPR000722">
    <property type="entry name" value="RNA_pol_asu"/>
</dbReference>
<dbReference type="InterPro" id="IPR006592">
    <property type="entry name" value="RNA_pol_N"/>
</dbReference>
<dbReference type="InterPro" id="IPR007080">
    <property type="entry name" value="RNA_pol_Rpb1_1"/>
</dbReference>
<dbReference type="InterPro" id="IPR007066">
    <property type="entry name" value="RNA_pol_Rpb1_3"/>
</dbReference>
<dbReference type="InterPro" id="IPR042102">
    <property type="entry name" value="RNA_pol_Rpb1_3_sf"/>
</dbReference>
<dbReference type="InterPro" id="IPR007083">
    <property type="entry name" value="RNA_pol_Rpb1_4"/>
</dbReference>
<dbReference type="InterPro" id="IPR007081">
    <property type="entry name" value="RNA_pol_Rpb1_5"/>
</dbReference>
<dbReference type="InterPro" id="IPR044893">
    <property type="entry name" value="RNA_pol_Rpb1_clamp_domain"/>
</dbReference>
<dbReference type="InterPro" id="IPR038120">
    <property type="entry name" value="Rpb1_funnel_sf"/>
</dbReference>
<dbReference type="NCBIfam" id="TIGR02386">
    <property type="entry name" value="rpoC_TIGR"/>
    <property type="match status" value="1"/>
</dbReference>
<dbReference type="PANTHER" id="PTHR19376">
    <property type="entry name" value="DNA-DIRECTED RNA POLYMERASE"/>
    <property type="match status" value="1"/>
</dbReference>
<dbReference type="PANTHER" id="PTHR19376:SF54">
    <property type="entry name" value="DNA-DIRECTED RNA POLYMERASE SUBUNIT BETA"/>
    <property type="match status" value="1"/>
</dbReference>
<dbReference type="Pfam" id="PF04997">
    <property type="entry name" value="RNA_pol_Rpb1_1"/>
    <property type="match status" value="1"/>
</dbReference>
<dbReference type="Pfam" id="PF00623">
    <property type="entry name" value="RNA_pol_Rpb1_2"/>
    <property type="match status" value="2"/>
</dbReference>
<dbReference type="Pfam" id="PF04983">
    <property type="entry name" value="RNA_pol_Rpb1_3"/>
    <property type="match status" value="1"/>
</dbReference>
<dbReference type="Pfam" id="PF05000">
    <property type="entry name" value="RNA_pol_Rpb1_4"/>
    <property type="match status" value="1"/>
</dbReference>
<dbReference type="Pfam" id="PF04998">
    <property type="entry name" value="RNA_pol_Rpb1_5"/>
    <property type="match status" value="1"/>
</dbReference>
<dbReference type="SMART" id="SM00663">
    <property type="entry name" value="RPOLA_N"/>
    <property type="match status" value="1"/>
</dbReference>
<dbReference type="SUPFAM" id="SSF64484">
    <property type="entry name" value="beta and beta-prime subunits of DNA dependent RNA-polymerase"/>
    <property type="match status" value="1"/>
</dbReference>